<comment type="function">
    <text evidence="1 3 4">Subunit of the V0 complex of vacuolar(H+)-ATPase (V-ATPase), a multisubunit enzyme composed of a peripheral complex (V1) that hydrolyzes ATP and a membrane integral complex (V0) that translocates protons (By similarity). V-ATPase is responsible for acidifying and maintaining the pH of intracellular compartments and in some cell types, is targeted to the plasma membrane, where it is responsible for acidifying the extracellular environment (By similarity). Required for assembly and activity of the vacuolar ATPase (By similarity).</text>
</comment>
<comment type="subunit">
    <text evidence="4">V-ATPase is a heteromultimeric enzyme made up of two complexes: the ATP-hydrolytic V1 complex and the proton translocation V0 complex (By similarity). The V1 complex consists of three catalytic AB heterodimers that form a heterohexamer, three peripheral stalks each consisting of EG heterodimers, one central rotor including subunits D and F, and the regulatory subunits C and H (By similarity). The proton translocation complex V0 consists of the proton transport subunit a, a ring of proteolipid subunits c9c'', rotary subunit d, subunits e and f, and two accessory subunits (By similarity).</text>
</comment>
<comment type="subcellular location">
    <subcellularLocation>
        <location evidence="2">Cytoplasmic vesicle</location>
        <location evidence="2">Clathrin-coated vesicle membrane</location>
        <topology evidence="6">Multi-pass membrane protein</topology>
    </subcellularLocation>
    <subcellularLocation>
        <location evidence="2">Cytoplasmic vesicle</location>
        <location evidence="2">Secretory vesicle</location>
        <location evidence="2">Synaptic vesicle membrane</location>
        <topology evidence="6">Multi-pass membrane protein</topology>
    </subcellularLocation>
    <subcellularLocation>
        <location evidence="5">Melanosome</location>
    </subcellularLocation>
</comment>
<comment type="tissue specificity">
    <text evidence="7">Detected in brain (at protein level). Highest expression in brain, intermediate levels in kidney, and relatively low levels in bone and liver.</text>
</comment>
<comment type="similarity">
    <text evidence="8">Belongs to the V-ATPase 116 kDa subunit family.</text>
</comment>
<organism>
    <name type="scientific">Gallus gallus</name>
    <name type="common">Chicken</name>
    <dbReference type="NCBI Taxonomy" id="9031"/>
    <lineage>
        <taxon>Eukaryota</taxon>
        <taxon>Metazoa</taxon>
        <taxon>Chordata</taxon>
        <taxon>Craniata</taxon>
        <taxon>Vertebrata</taxon>
        <taxon>Euteleostomi</taxon>
        <taxon>Archelosauria</taxon>
        <taxon>Archosauria</taxon>
        <taxon>Dinosauria</taxon>
        <taxon>Saurischia</taxon>
        <taxon>Theropoda</taxon>
        <taxon>Coelurosauria</taxon>
        <taxon>Aves</taxon>
        <taxon>Neognathae</taxon>
        <taxon>Galloanserae</taxon>
        <taxon>Galliformes</taxon>
        <taxon>Phasianidae</taxon>
        <taxon>Phasianinae</taxon>
        <taxon>Gallus</taxon>
    </lineage>
</organism>
<keyword id="KW-0968">Cytoplasmic vesicle</keyword>
<keyword id="KW-0375">Hydrogen ion transport</keyword>
<keyword id="KW-0406">Ion transport</keyword>
<keyword id="KW-0472">Membrane</keyword>
<keyword id="KW-1185">Reference proteome</keyword>
<keyword id="KW-0770">Synapse</keyword>
<keyword id="KW-0812">Transmembrane</keyword>
<keyword id="KW-1133">Transmembrane helix</keyword>
<keyword id="KW-0813">Transport</keyword>
<reference key="1">
    <citation type="journal article" date="2000" name="Eur. J. Biochem.">
        <title>Properties of three isoforms of the 116-kDa subunit of vacuolar H+-ATPase from a single vertebrate species. Cloning, gene expression and protein characterization of functionally distinct isoforms in Gallus gallus.</title>
        <authorList>
            <person name="Mattsson J.P."/>
            <person name="Li X."/>
            <person name="Peng S.-B."/>
            <person name="Nilsson F."/>
            <person name="Andersen P."/>
            <person name="Lundberg L.G."/>
            <person name="Stone D.K."/>
            <person name="Keeling D.J."/>
        </authorList>
    </citation>
    <scope>NUCLEOTIDE SEQUENCE [MRNA]</scope>
    <scope>IDENTIFICATION BY MASS SPECTROMETRY</scope>
    <scope>TISSUE SPECIFICITY</scope>
    <source>
        <tissue>Brain</tissue>
    </source>
</reference>
<dbReference type="EMBL" id="AJ289019">
    <property type="protein sequence ID" value="CAB93527.1"/>
    <property type="molecule type" value="mRNA"/>
</dbReference>
<dbReference type="RefSeq" id="NP_990055.1">
    <property type="nucleotide sequence ID" value="NM_204724.2"/>
</dbReference>
<dbReference type="SMR" id="Q9I8D0"/>
<dbReference type="FunCoup" id="Q9I8D0">
    <property type="interactions" value="2126"/>
</dbReference>
<dbReference type="STRING" id="9031.ENSGALP00000048041"/>
<dbReference type="BindingDB" id="Q9I8D0"/>
<dbReference type="ChEMBL" id="CHEMBL2683"/>
<dbReference type="GlyGen" id="Q9I8D0">
    <property type="glycosylation" value="1 site"/>
</dbReference>
<dbReference type="PaxDb" id="9031-ENSGALP00000005145"/>
<dbReference type="GeneID" id="395474"/>
<dbReference type="KEGG" id="gga:395474"/>
<dbReference type="CTD" id="535"/>
<dbReference type="VEuPathDB" id="HostDB:geneid_395474"/>
<dbReference type="eggNOG" id="KOG2189">
    <property type="taxonomic scope" value="Eukaryota"/>
</dbReference>
<dbReference type="InParanoid" id="Q9I8D0"/>
<dbReference type="OrthoDB" id="10264220at2759"/>
<dbReference type="PhylomeDB" id="Q9I8D0"/>
<dbReference type="PRO" id="PR:Q9I8D0"/>
<dbReference type="Proteomes" id="UP000000539">
    <property type="component" value="Unassembled WGS sequence"/>
</dbReference>
<dbReference type="GO" id="GO:0030665">
    <property type="term" value="C:clathrin-coated vesicle membrane"/>
    <property type="evidence" value="ECO:0007669"/>
    <property type="project" value="UniProtKB-SubCell"/>
</dbReference>
<dbReference type="GO" id="GO:0042470">
    <property type="term" value="C:melanosome"/>
    <property type="evidence" value="ECO:0007669"/>
    <property type="project" value="UniProtKB-SubCell"/>
</dbReference>
<dbReference type="GO" id="GO:0005886">
    <property type="term" value="C:plasma membrane"/>
    <property type="evidence" value="ECO:0000318"/>
    <property type="project" value="GO_Central"/>
</dbReference>
<dbReference type="GO" id="GO:0030672">
    <property type="term" value="C:synaptic vesicle membrane"/>
    <property type="evidence" value="ECO:0007669"/>
    <property type="project" value="UniProtKB-SubCell"/>
</dbReference>
<dbReference type="GO" id="GO:0016471">
    <property type="term" value="C:vacuolar proton-transporting V-type ATPase complex"/>
    <property type="evidence" value="ECO:0000318"/>
    <property type="project" value="GO_Central"/>
</dbReference>
<dbReference type="GO" id="GO:0000220">
    <property type="term" value="C:vacuolar proton-transporting V-type ATPase, V0 domain"/>
    <property type="evidence" value="ECO:0007669"/>
    <property type="project" value="InterPro"/>
</dbReference>
<dbReference type="GO" id="GO:0051117">
    <property type="term" value="F:ATPase binding"/>
    <property type="evidence" value="ECO:0000318"/>
    <property type="project" value="GO_Central"/>
</dbReference>
<dbReference type="GO" id="GO:0046961">
    <property type="term" value="F:proton-transporting ATPase activity, rotational mechanism"/>
    <property type="evidence" value="ECO:0007669"/>
    <property type="project" value="InterPro"/>
</dbReference>
<dbReference type="GO" id="GO:0007035">
    <property type="term" value="P:vacuolar acidification"/>
    <property type="evidence" value="ECO:0000318"/>
    <property type="project" value="GO_Central"/>
</dbReference>
<dbReference type="InterPro" id="IPR002490">
    <property type="entry name" value="V-ATPase_116kDa_su"/>
</dbReference>
<dbReference type="InterPro" id="IPR026028">
    <property type="entry name" value="V-type_ATPase_116kDa_su_euka"/>
</dbReference>
<dbReference type="PANTHER" id="PTHR11629:SF68">
    <property type="entry name" value="V-TYPE PROTON ATPASE 116 KDA SUBUNIT A 1"/>
    <property type="match status" value="1"/>
</dbReference>
<dbReference type="PANTHER" id="PTHR11629">
    <property type="entry name" value="VACUOLAR PROTON ATPASES"/>
    <property type="match status" value="1"/>
</dbReference>
<dbReference type="Pfam" id="PF01496">
    <property type="entry name" value="V_ATPase_I"/>
    <property type="match status" value="1"/>
</dbReference>
<dbReference type="PIRSF" id="PIRSF001293">
    <property type="entry name" value="ATP6V0A1"/>
    <property type="match status" value="1"/>
</dbReference>
<evidence type="ECO:0000250" key="1">
    <source>
        <dbReference type="UniProtKB" id="G5EGP4"/>
    </source>
</evidence>
<evidence type="ECO:0000250" key="2">
    <source>
        <dbReference type="UniProtKB" id="P25286"/>
    </source>
</evidence>
<evidence type="ECO:0000250" key="3">
    <source>
        <dbReference type="UniProtKB" id="P32563"/>
    </source>
</evidence>
<evidence type="ECO:0000250" key="4">
    <source>
        <dbReference type="UniProtKB" id="Q29466"/>
    </source>
</evidence>
<evidence type="ECO:0000250" key="5">
    <source>
        <dbReference type="UniProtKB" id="Q93050"/>
    </source>
</evidence>
<evidence type="ECO:0000255" key="6"/>
<evidence type="ECO:0000269" key="7">
    <source>
    </source>
</evidence>
<evidence type="ECO:0000305" key="8"/>
<name>VPP1_CHICK</name>
<gene>
    <name type="primary">ATP6V0A1</name>
</gene>
<proteinExistence type="evidence at protein level"/>
<feature type="chain" id="PRO_0000318901" description="V-type proton ATPase 116 kDa subunit a 1">
    <location>
        <begin position="1"/>
        <end position="838"/>
    </location>
</feature>
<feature type="topological domain" description="Cytoplasmic" evidence="6">
    <location>
        <begin position="1"/>
        <end position="388"/>
    </location>
</feature>
<feature type="transmembrane region" description="Helical" evidence="6">
    <location>
        <begin position="389"/>
        <end position="407"/>
    </location>
</feature>
<feature type="topological domain" description="Vacuolar" evidence="6">
    <location>
        <begin position="408"/>
        <end position="409"/>
    </location>
</feature>
<feature type="transmembrane region" description="Helical" evidence="6">
    <location>
        <begin position="410"/>
        <end position="426"/>
    </location>
</feature>
<feature type="topological domain" description="Cytoplasmic" evidence="6">
    <location>
        <begin position="427"/>
        <end position="441"/>
    </location>
</feature>
<feature type="transmembrane region" description="Helical" evidence="6">
    <location>
        <begin position="442"/>
        <end position="471"/>
    </location>
</feature>
<feature type="topological domain" description="Vacuolar" evidence="6">
    <location>
        <begin position="472"/>
        <end position="535"/>
    </location>
</feature>
<feature type="transmembrane region" description="Helical" evidence="6">
    <location>
        <begin position="536"/>
        <end position="555"/>
    </location>
</feature>
<feature type="topological domain" description="Cytoplasmic" evidence="6">
    <location>
        <begin position="556"/>
        <end position="573"/>
    </location>
</feature>
<feature type="transmembrane region" description="Helical" evidence="6">
    <location>
        <begin position="574"/>
        <end position="594"/>
    </location>
</feature>
<feature type="topological domain" description="Vacuolar" evidence="6">
    <location>
        <begin position="595"/>
        <end position="639"/>
    </location>
</feature>
<feature type="transmembrane region" description="Helical" evidence="6">
    <location>
        <begin position="640"/>
        <end position="659"/>
    </location>
</feature>
<feature type="topological domain" description="Cytoplasmic" evidence="6">
    <location>
        <begin position="660"/>
        <end position="725"/>
    </location>
</feature>
<feature type="transmembrane region" description="Helical" evidence="6">
    <location>
        <begin position="726"/>
        <end position="750"/>
    </location>
</feature>
<feature type="topological domain" description="Vacuolar" evidence="6">
    <location>
        <begin position="751"/>
        <end position="771"/>
    </location>
</feature>
<feature type="transmembrane region" description="Helical" evidence="6">
    <location>
        <begin position="772"/>
        <end position="810"/>
    </location>
</feature>
<feature type="topological domain" description="Cytoplasmic" evidence="6">
    <location>
        <begin position="811"/>
        <end position="838"/>
    </location>
</feature>
<accession>Q9I8D0</accession>
<protein>
    <recommendedName>
        <fullName>V-type proton ATPase 116 kDa subunit a 1</fullName>
        <shortName>V-ATPase 116 kDa subunit a 1</shortName>
    </recommendedName>
    <alternativeName>
        <fullName>Vacuolar proton translocating ATPase 116 kDa subunit a isoform 1</fullName>
    </alternativeName>
</protein>
<sequence length="838" mass="95984">MGELFRSEEMTLAQLFLQSEAAYCCVSELGELGKVQFRDLNPDVNVFQRKFVNEVRRCEEMDRKLRFVEKEIKKANIPIMDTGENPEVPFPRDMIDLEANFEKIENELKEINTNQEALKRNFLELTELKFILRKTQQFFDEMADPDLLEESSSLLEPSEMGRGAPLRLGFVAGVINRERIPTFERMLWRVCRGNVFLRQAEIENPLEDPVTGDYVHKSVFIIFFQGDQLKNRVKKICEGFRASLYPCPETPQERKEMASGVNTRIDDLQMVLNQTEDHRQRVLQAAAKNIRVWFIKVRKMKAIYHTLNLCNIDVTQKCLSAEVWCPVADLDSIQFALRRGTEHSGSTVPSILNRMQTNQTPPTYNKTNKFTCGFQNIVDAYGIGTYREINPAPYTIITFPFLFAVMFGDFGHGILMTLIAIWMVLRESRILSQKSDNEMFSTVFSGRYIILLMGLFSTYTGLIYNDCFSKSLNMFGSSWSVRPMFSKANWSDELLKTTPLLQLDPAEAGVFGGPYPFGIDPIWNIANNKLAFLNSFKMKMSVILGIIHMLFGVMLSLLNHIYFKKPLNIYLGFIPEMIFMSSLFGYLVILIFYKWTAYDAHTSKEAPSPLIHFINMFLFSYGDTSNKMLYRGQKGIQCFLVVVALLCVPWMLVAKPLVLRHQYLRRKHLGTHNFGGIRVGNGPTEEDAEIIQHDQLSTHSEEGEEPTEDEVFDFADTVVYQAIHTIEYCLGCISNTASYLRLWALSLAHAQLSEVLWTMVIHTGLSVRSLAGGFGLVFIFAAFATLTVAILLVMEGLSAFLHALRLHWIEFQNKFYTGTGFKFLPFSFDPIREGKFDD</sequence>